<dbReference type="EMBL" id="AC005309">
    <property type="protein sequence ID" value="AAC63639.1"/>
    <property type="status" value="ALT_SEQ"/>
    <property type="molecule type" value="Genomic_DNA"/>
</dbReference>
<dbReference type="EMBL" id="CP002685">
    <property type="protein sequence ID" value="AEC10897.1"/>
    <property type="molecule type" value="Genomic_DNA"/>
</dbReference>
<dbReference type="EMBL" id="CP002685">
    <property type="protein sequence ID" value="AEC10899.1"/>
    <property type="molecule type" value="Genomic_DNA"/>
</dbReference>
<dbReference type="EMBL" id="BT030391">
    <property type="protein sequence ID" value="ABO45694.1"/>
    <property type="molecule type" value="mRNA"/>
</dbReference>
<dbReference type="EMBL" id="BT004106">
    <property type="protein sequence ID" value="AAO42129.1"/>
    <property type="molecule type" value="mRNA"/>
</dbReference>
<dbReference type="PIR" id="C84920">
    <property type="entry name" value="C84920"/>
</dbReference>
<dbReference type="RefSeq" id="NP_001078078.1">
    <molecule id="Q84W91-1"/>
    <property type="nucleotide sequence ID" value="NM_001084609.1"/>
</dbReference>
<dbReference type="RefSeq" id="NP_182306.2">
    <molecule id="Q84W91-1"/>
    <property type="nucleotide sequence ID" value="NM_130352.3"/>
</dbReference>
<dbReference type="BioGRID" id="4732">
    <property type="interactions" value="2"/>
</dbReference>
<dbReference type="FunCoup" id="Q84W91">
    <property type="interactions" value="1059"/>
</dbReference>
<dbReference type="IntAct" id="Q84W91">
    <property type="interactions" value="2"/>
</dbReference>
<dbReference type="STRING" id="3702.Q84W91"/>
<dbReference type="GlyGen" id="Q84W91">
    <property type="glycosylation" value="2 sites, 1 O-linked glycan (2 sites)"/>
</dbReference>
<dbReference type="PaxDb" id="3702-AT2G47850.1"/>
<dbReference type="ProteomicsDB" id="240448">
    <molecule id="Q84W91-1"/>
</dbReference>
<dbReference type="EnsemblPlants" id="AT2G47850.1">
    <molecule id="Q84W91-1"/>
    <property type="protein sequence ID" value="AT2G47850.1"/>
    <property type="gene ID" value="AT2G47850"/>
</dbReference>
<dbReference type="EnsemblPlants" id="AT2G47850.3">
    <molecule id="Q84W91-1"/>
    <property type="protein sequence ID" value="AT2G47850.3"/>
    <property type="gene ID" value="AT2G47850"/>
</dbReference>
<dbReference type="GeneID" id="819397"/>
<dbReference type="Gramene" id="AT2G47850.1">
    <molecule id="Q84W91-1"/>
    <property type="protein sequence ID" value="AT2G47850.1"/>
    <property type="gene ID" value="AT2G47850"/>
</dbReference>
<dbReference type="Gramene" id="AT2G47850.3">
    <molecule id="Q84W91-1"/>
    <property type="protein sequence ID" value="AT2G47850.3"/>
    <property type="gene ID" value="AT2G47850"/>
</dbReference>
<dbReference type="KEGG" id="ath:AT2G47850"/>
<dbReference type="Araport" id="AT2G47850"/>
<dbReference type="TAIR" id="AT2G47850"/>
<dbReference type="eggNOG" id="KOG1677">
    <property type="taxonomic scope" value="Eukaryota"/>
</dbReference>
<dbReference type="HOGENOM" id="CLU_033292_1_0_1"/>
<dbReference type="InParanoid" id="Q84W91"/>
<dbReference type="OMA" id="PPSANCN"/>
<dbReference type="OrthoDB" id="411372at2759"/>
<dbReference type="PhylomeDB" id="Q84W91"/>
<dbReference type="PRO" id="PR:Q84W91"/>
<dbReference type="Proteomes" id="UP000006548">
    <property type="component" value="Chromosome 2"/>
</dbReference>
<dbReference type="ExpressionAtlas" id="Q84W91">
    <property type="expression patterns" value="baseline and differential"/>
</dbReference>
<dbReference type="GO" id="GO:0005634">
    <property type="term" value="C:nucleus"/>
    <property type="evidence" value="ECO:0007669"/>
    <property type="project" value="UniProtKB-SubCell"/>
</dbReference>
<dbReference type="GO" id="GO:0003677">
    <property type="term" value="F:DNA binding"/>
    <property type="evidence" value="ECO:0007669"/>
    <property type="project" value="UniProtKB-KW"/>
</dbReference>
<dbReference type="GO" id="GO:0003729">
    <property type="term" value="F:mRNA binding"/>
    <property type="evidence" value="ECO:0000314"/>
    <property type="project" value="TAIR"/>
</dbReference>
<dbReference type="GO" id="GO:0008270">
    <property type="term" value="F:zinc ion binding"/>
    <property type="evidence" value="ECO:0007669"/>
    <property type="project" value="UniProtKB-KW"/>
</dbReference>
<dbReference type="FunFam" id="4.10.1000.10:FF:000030">
    <property type="entry name" value="CCCH type zinc finger protein"/>
    <property type="match status" value="1"/>
</dbReference>
<dbReference type="FunFam" id="4.10.1000.10:FF:000028">
    <property type="entry name" value="Zinc finger nuclease 2"/>
    <property type="match status" value="1"/>
</dbReference>
<dbReference type="Gene3D" id="2.30.30.1190">
    <property type="match status" value="1"/>
</dbReference>
<dbReference type="Gene3D" id="4.10.1000.10">
    <property type="entry name" value="Zinc finger, CCCH-type"/>
    <property type="match status" value="2"/>
</dbReference>
<dbReference type="InterPro" id="IPR050974">
    <property type="entry name" value="Plant_ZF_CCCH"/>
</dbReference>
<dbReference type="InterPro" id="IPR000571">
    <property type="entry name" value="Znf_CCCH"/>
</dbReference>
<dbReference type="InterPro" id="IPR036855">
    <property type="entry name" value="Znf_CCCH_sf"/>
</dbReference>
<dbReference type="PANTHER" id="PTHR12506">
    <property type="entry name" value="PROTEIN PHOSPHATASE RELATED"/>
    <property type="match status" value="1"/>
</dbReference>
<dbReference type="PANTHER" id="PTHR12506:SF43">
    <property type="entry name" value="ZINC FINGER CCCH DOMAIN-CONTAINING PROTEIN 32"/>
    <property type="match status" value="1"/>
</dbReference>
<dbReference type="Pfam" id="PF00642">
    <property type="entry name" value="zf-CCCH"/>
    <property type="match status" value="5"/>
</dbReference>
<dbReference type="SMART" id="SM00356">
    <property type="entry name" value="ZnF_C3H1"/>
    <property type="match status" value="5"/>
</dbReference>
<dbReference type="SUPFAM" id="SSF90229">
    <property type="entry name" value="CCCH zinc finger"/>
    <property type="match status" value="5"/>
</dbReference>
<dbReference type="PROSITE" id="PS50103">
    <property type="entry name" value="ZF_C3H1"/>
    <property type="match status" value="5"/>
</dbReference>
<name>C3H32_ARATH</name>
<keyword id="KW-0025">Alternative splicing</keyword>
<keyword id="KW-0238">DNA-binding</keyword>
<keyword id="KW-0479">Metal-binding</keyword>
<keyword id="KW-0539">Nucleus</keyword>
<keyword id="KW-1185">Reference proteome</keyword>
<keyword id="KW-0677">Repeat</keyword>
<keyword id="KW-0862">Zinc</keyword>
<keyword id="KW-0863">Zinc-finger</keyword>
<evidence type="ECO:0000250" key="1"/>
<evidence type="ECO:0000255" key="2">
    <source>
        <dbReference type="PROSITE-ProRule" id="PRU00723"/>
    </source>
</evidence>
<evidence type="ECO:0000256" key="3">
    <source>
        <dbReference type="SAM" id="MobiDB-lite"/>
    </source>
</evidence>
<evidence type="ECO:0000305" key="4"/>
<proteinExistence type="evidence at transcript level"/>
<feature type="chain" id="PRO_0000213915" description="Zinc finger CCCH domain-containing protein 32">
    <location>
        <begin position="1"/>
        <end position="468"/>
    </location>
</feature>
<feature type="zinc finger region" description="C3H1-type 1" evidence="2">
    <location>
        <begin position="45"/>
        <end position="73"/>
    </location>
</feature>
<feature type="zinc finger region" description="C3H1-type 2" evidence="2">
    <location>
        <begin position="90"/>
        <end position="118"/>
    </location>
</feature>
<feature type="zinc finger region" description="C3H1-type 3" evidence="2">
    <location>
        <begin position="136"/>
        <end position="164"/>
    </location>
</feature>
<feature type="zinc finger region" description="C3H1-type 4" evidence="2">
    <location>
        <begin position="289"/>
        <end position="317"/>
    </location>
</feature>
<feature type="zinc finger region" description="C3H1-type 5" evidence="2">
    <location>
        <begin position="335"/>
        <end position="363"/>
    </location>
</feature>
<feature type="region of interest" description="Disordered" evidence="3">
    <location>
        <begin position="1"/>
        <end position="25"/>
    </location>
</feature>
<gene>
    <name type="ordered locus">At2g47850</name>
    <name type="ORF">F17A22.24</name>
</gene>
<protein>
    <recommendedName>
        <fullName>Zinc finger CCCH domain-containing protein 32</fullName>
        <shortName>AtC3H32</shortName>
    </recommendedName>
    <alternativeName>
        <fullName>Zinc finger CCCH domain-containing protein ZFN-like 1</fullName>
    </alternativeName>
</protein>
<comment type="subcellular location">
    <subcellularLocation>
        <location evidence="1">Nucleus</location>
    </subcellularLocation>
</comment>
<comment type="alternative products">
    <event type="alternative splicing"/>
    <isoform>
        <id>Q84W91-1</id>
        <name>1</name>
        <sequence type="displayed"/>
    </isoform>
    <text>A number of isoforms are produced. According to EST sequences.</text>
</comment>
<comment type="sequence caution" evidence="4">
    <conflict type="erroneous gene model prediction">
        <sequence resource="EMBL-CDS" id="AAC63639"/>
    </conflict>
</comment>
<accession>Q84W91</accession>
<accession>A4IJ33</accession>
<accession>O82252</accession>
<organism>
    <name type="scientific">Arabidopsis thaliana</name>
    <name type="common">Mouse-ear cress</name>
    <dbReference type="NCBI Taxonomy" id="3702"/>
    <lineage>
        <taxon>Eukaryota</taxon>
        <taxon>Viridiplantae</taxon>
        <taxon>Streptophyta</taxon>
        <taxon>Embryophyta</taxon>
        <taxon>Tracheophyta</taxon>
        <taxon>Spermatophyta</taxon>
        <taxon>Magnoliopsida</taxon>
        <taxon>eudicotyledons</taxon>
        <taxon>Gunneridae</taxon>
        <taxon>Pentapetalae</taxon>
        <taxon>rosids</taxon>
        <taxon>malvids</taxon>
        <taxon>Brassicales</taxon>
        <taxon>Brassicaceae</taxon>
        <taxon>Camelineae</taxon>
        <taxon>Arabidopsis</taxon>
    </lineage>
</organism>
<reference key="1">
    <citation type="journal article" date="1999" name="Nature">
        <title>Sequence and analysis of chromosome 2 of the plant Arabidopsis thaliana.</title>
        <authorList>
            <person name="Lin X."/>
            <person name="Kaul S."/>
            <person name="Rounsley S.D."/>
            <person name="Shea T.P."/>
            <person name="Benito M.-I."/>
            <person name="Town C.D."/>
            <person name="Fujii C.Y."/>
            <person name="Mason T.M."/>
            <person name="Bowman C.L."/>
            <person name="Barnstead M.E."/>
            <person name="Feldblyum T.V."/>
            <person name="Buell C.R."/>
            <person name="Ketchum K.A."/>
            <person name="Lee J.J."/>
            <person name="Ronning C.M."/>
            <person name="Koo H.L."/>
            <person name="Moffat K.S."/>
            <person name="Cronin L.A."/>
            <person name="Shen M."/>
            <person name="Pai G."/>
            <person name="Van Aken S."/>
            <person name="Umayam L."/>
            <person name="Tallon L.J."/>
            <person name="Gill J.E."/>
            <person name="Adams M.D."/>
            <person name="Carrera A.J."/>
            <person name="Creasy T.H."/>
            <person name="Goodman H.M."/>
            <person name="Somerville C.R."/>
            <person name="Copenhaver G.P."/>
            <person name="Preuss D."/>
            <person name="Nierman W.C."/>
            <person name="White O."/>
            <person name="Eisen J.A."/>
            <person name="Salzberg S.L."/>
            <person name="Fraser C.M."/>
            <person name="Venter J.C."/>
        </authorList>
    </citation>
    <scope>NUCLEOTIDE SEQUENCE [LARGE SCALE GENOMIC DNA]</scope>
    <source>
        <strain>cv. Columbia</strain>
    </source>
</reference>
<reference key="2">
    <citation type="journal article" date="2017" name="Plant J.">
        <title>Araport11: a complete reannotation of the Arabidopsis thaliana reference genome.</title>
        <authorList>
            <person name="Cheng C.Y."/>
            <person name="Krishnakumar V."/>
            <person name="Chan A.P."/>
            <person name="Thibaud-Nissen F."/>
            <person name="Schobel S."/>
            <person name="Town C.D."/>
        </authorList>
    </citation>
    <scope>GENOME REANNOTATION</scope>
    <source>
        <strain>cv. Columbia</strain>
    </source>
</reference>
<reference key="3">
    <citation type="submission" date="2007-03" db="EMBL/GenBank/DDBJ databases">
        <title>Arabidopsis ORF clones.</title>
        <authorList>
            <person name="Kim C.J."/>
            <person name="Bautista V.R."/>
            <person name="Chen H."/>
            <person name="De Los Reyes C."/>
            <person name="Wu S.Y."/>
            <person name="Ecker J.R."/>
        </authorList>
    </citation>
    <scope>NUCLEOTIDE SEQUENCE [LARGE SCALE MRNA]</scope>
    <source>
        <strain>cv. Columbia</strain>
    </source>
</reference>
<reference key="4">
    <citation type="journal article" date="2003" name="Science">
        <title>Empirical analysis of transcriptional activity in the Arabidopsis genome.</title>
        <authorList>
            <person name="Yamada K."/>
            <person name="Lim J."/>
            <person name="Dale J.M."/>
            <person name="Chen H."/>
            <person name="Shinn P."/>
            <person name="Palm C.J."/>
            <person name="Southwick A.M."/>
            <person name="Wu H.C."/>
            <person name="Kim C.J."/>
            <person name="Nguyen M."/>
            <person name="Pham P.K."/>
            <person name="Cheuk R.F."/>
            <person name="Karlin-Newmann G."/>
            <person name="Liu S.X."/>
            <person name="Lam B."/>
            <person name="Sakano H."/>
            <person name="Wu T."/>
            <person name="Yu G."/>
            <person name="Miranda M."/>
            <person name="Quach H.L."/>
            <person name="Tripp M."/>
            <person name="Chang C.H."/>
            <person name="Lee J.M."/>
            <person name="Toriumi M.J."/>
            <person name="Chan M.M."/>
            <person name="Tang C.C."/>
            <person name="Onodera C.S."/>
            <person name="Deng J.M."/>
            <person name="Akiyama K."/>
            <person name="Ansari Y."/>
            <person name="Arakawa T."/>
            <person name="Banh J."/>
            <person name="Banno F."/>
            <person name="Bowser L."/>
            <person name="Brooks S.Y."/>
            <person name="Carninci P."/>
            <person name="Chao Q."/>
            <person name="Choy N."/>
            <person name="Enju A."/>
            <person name="Goldsmith A.D."/>
            <person name="Gurjal M."/>
            <person name="Hansen N.F."/>
            <person name="Hayashizaki Y."/>
            <person name="Johnson-Hopson C."/>
            <person name="Hsuan V.W."/>
            <person name="Iida K."/>
            <person name="Karnes M."/>
            <person name="Khan S."/>
            <person name="Koesema E."/>
            <person name="Ishida J."/>
            <person name="Jiang P.X."/>
            <person name="Jones T."/>
            <person name="Kawai J."/>
            <person name="Kamiya A."/>
            <person name="Meyers C."/>
            <person name="Nakajima M."/>
            <person name="Narusaka M."/>
            <person name="Seki M."/>
            <person name="Sakurai T."/>
            <person name="Satou M."/>
            <person name="Tamse R."/>
            <person name="Vaysberg M."/>
            <person name="Wallender E.K."/>
            <person name="Wong C."/>
            <person name="Yamamura Y."/>
            <person name="Yuan S."/>
            <person name="Shinozaki K."/>
            <person name="Davis R.W."/>
            <person name="Theologis A."/>
            <person name="Ecker J.R."/>
        </authorList>
    </citation>
    <scope>NUCLEOTIDE SEQUENCE [LARGE SCALE MRNA] OF 318-468</scope>
    <source>
        <strain>cv. Columbia</strain>
    </source>
</reference>
<reference key="5">
    <citation type="journal article" date="2008" name="BMC Genomics">
        <title>Genome-wide analysis of CCCH zinc finger family in Arabidopsis and rice.</title>
        <authorList>
            <person name="Wang D."/>
            <person name="Guo Y."/>
            <person name="Wu C."/>
            <person name="Yang G."/>
            <person name="Li Y."/>
            <person name="Zheng C."/>
        </authorList>
    </citation>
    <scope>NOMENCLATURE</scope>
</reference>
<sequence length="468" mass="50040">MYARNPPLNGSQSAQAPDWTPADADTGLQESMWRLGLGSDSYPERPGAPDCAYYMRTGVCGYGNRCRYNHPRDRASVEATVRATGQYPERFGEPPCQFYLKTGTCKFGASCKFHHPKNAGGSMSHVPLNIYGYPVREGDNECSYYLKTGQCKFGITCKFHHPQPAGTTVPPPPASAPQFYPSVQSLMPDQYGGPSSSLRVARTLLPGSYMQGAYGPMLLTPGVVPIPGWSPYSAPVSPALSPGAQHAVGATSLYGVTQLTSTTPSLPGVYPSLSSPTGVIQKEQAFPERPGEPECQYYLKTGDCKFGTSCKFHHPRDRVPPRANCVLSPIGLPLRPGVQRCTFYVQNGFCKFGSTCKFDHPMGTIRYNPSASSLADAPVAPYPVSSLLGALAAAPSSSSTELIAGGAKDAYMTGVPTSRSTSNISAGLIFSQSGGSIPFSELQLSSQSSLPLTGSRITRQGREIRRSF</sequence>